<accession>Q7N6K1</accession>
<gene>
    <name type="ordered locus">plu1549</name>
</gene>
<organism>
    <name type="scientific">Photorhabdus laumondii subsp. laumondii (strain DSM 15139 / CIP 105565 / TT01)</name>
    <name type="common">Photorhabdus luminescens subsp. laumondii</name>
    <dbReference type="NCBI Taxonomy" id="243265"/>
    <lineage>
        <taxon>Bacteria</taxon>
        <taxon>Pseudomonadati</taxon>
        <taxon>Pseudomonadota</taxon>
        <taxon>Gammaproteobacteria</taxon>
        <taxon>Enterobacterales</taxon>
        <taxon>Morganellaceae</taxon>
        <taxon>Photorhabdus</taxon>
    </lineage>
</organism>
<comment type="subcellular location">
    <subcellularLocation>
        <location evidence="1">Cell inner membrane</location>
        <topology evidence="1">Multi-pass membrane protein</topology>
    </subcellularLocation>
</comment>
<comment type="similarity">
    <text evidence="1">Belongs to the UPF0299 family.</text>
</comment>
<name>Y1549_PHOLL</name>
<evidence type="ECO:0000255" key="1">
    <source>
        <dbReference type="HAMAP-Rule" id="MF_01144"/>
    </source>
</evidence>
<keyword id="KW-0997">Cell inner membrane</keyword>
<keyword id="KW-1003">Cell membrane</keyword>
<keyword id="KW-0472">Membrane</keyword>
<keyword id="KW-1185">Reference proteome</keyword>
<keyword id="KW-0812">Transmembrane</keyword>
<keyword id="KW-1133">Transmembrane helix</keyword>
<protein>
    <recommendedName>
        <fullName evidence="1">UPF0299 membrane protein plu1549</fullName>
    </recommendedName>
</protein>
<feature type="chain" id="PRO_0000072811" description="UPF0299 membrane protein plu1549">
    <location>
        <begin position="1"/>
        <end position="145"/>
    </location>
</feature>
<feature type="transmembrane region" description="Helical" evidence="1">
    <location>
        <begin position="6"/>
        <end position="26"/>
    </location>
</feature>
<feature type="transmembrane region" description="Helical" evidence="1">
    <location>
        <begin position="34"/>
        <end position="54"/>
    </location>
</feature>
<feature type="transmembrane region" description="Helical" evidence="1">
    <location>
        <begin position="65"/>
        <end position="85"/>
    </location>
</feature>
<feature type="transmembrane region" description="Helical" evidence="1">
    <location>
        <begin position="95"/>
        <end position="115"/>
    </location>
</feature>
<proteinExistence type="inferred from homology"/>
<sequence length="145" mass="16322">MSFREVLIVGWQYLRAFVLIYLCLLTGNAISSLLPIIIPGSIIGMLILFVLLAFQLIPAHWAKPGCSLLLKNMTLLFLPIGVGVMNYYDQLSQQIIPIVFSCLISTAIVMIIVAYSSHYVHRERPIVGSTSEINNEQQKQEKQEK</sequence>
<reference key="1">
    <citation type="journal article" date="2003" name="Nat. Biotechnol.">
        <title>The genome sequence of the entomopathogenic bacterium Photorhabdus luminescens.</title>
        <authorList>
            <person name="Duchaud E."/>
            <person name="Rusniok C."/>
            <person name="Frangeul L."/>
            <person name="Buchrieser C."/>
            <person name="Givaudan A."/>
            <person name="Taourit S."/>
            <person name="Bocs S."/>
            <person name="Boursaux-Eude C."/>
            <person name="Chandler M."/>
            <person name="Charles J.-F."/>
            <person name="Dassa E."/>
            <person name="Derose R."/>
            <person name="Derzelle S."/>
            <person name="Freyssinet G."/>
            <person name="Gaudriault S."/>
            <person name="Medigue C."/>
            <person name="Lanois A."/>
            <person name="Powell K."/>
            <person name="Siguier P."/>
            <person name="Vincent R."/>
            <person name="Wingate V."/>
            <person name="Zouine M."/>
            <person name="Glaser P."/>
            <person name="Boemare N."/>
            <person name="Danchin A."/>
            <person name="Kunst F."/>
        </authorList>
    </citation>
    <scope>NUCLEOTIDE SEQUENCE [LARGE SCALE GENOMIC DNA]</scope>
    <source>
        <strain>DSM 15139 / CIP 105565 / TT01</strain>
    </source>
</reference>
<dbReference type="EMBL" id="BX571864">
    <property type="protein sequence ID" value="CAE13842.1"/>
    <property type="molecule type" value="Genomic_DNA"/>
</dbReference>
<dbReference type="RefSeq" id="WP_011145846.1">
    <property type="nucleotide sequence ID" value="NC_005126.1"/>
</dbReference>
<dbReference type="SMR" id="Q7N6K1"/>
<dbReference type="STRING" id="243265.plu1549"/>
<dbReference type="GeneID" id="48847837"/>
<dbReference type="KEGG" id="plu:plu1549"/>
<dbReference type="eggNOG" id="COG1380">
    <property type="taxonomic scope" value="Bacteria"/>
</dbReference>
<dbReference type="HOGENOM" id="CLU_113736_1_0_6"/>
<dbReference type="OrthoDB" id="385012at2"/>
<dbReference type="Proteomes" id="UP000002514">
    <property type="component" value="Chromosome"/>
</dbReference>
<dbReference type="GO" id="GO:0005886">
    <property type="term" value="C:plasma membrane"/>
    <property type="evidence" value="ECO:0007669"/>
    <property type="project" value="UniProtKB-SubCell"/>
</dbReference>
<dbReference type="HAMAP" id="MF_01144">
    <property type="entry name" value="UPF0299"/>
    <property type="match status" value="1"/>
</dbReference>
<dbReference type="InterPro" id="IPR005538">
    <property type="entry name" value="LrgA/CidA"/>
</dbReference>
<dbReference type="InterPro" id="IPR022957">
    <property type="entry name" value="Uncharacterised_UPF0299"/>
</dbReference>
<dbReference type="NCBIfam" id="NF002494">
    <property type="entry name" value="PRK01821.1"/>
    <property type="match status" value="1"/>
</dbReference>
<dbReference type="PANTHER" id="PTHR33931">
    <property type="entry name" value="HOLIN-LIKE PROTEIN CIDA-RELATED"/>
    <property type="match status" value="1"/>
</dbReference>
<dbReference type="PANTHER" id="PTHR33931:SF5">
    <property type="entry name" value="UPF0299 MEMBRANE PROTEIN YOHJ"/>
    <property type="match status" value="1"/>
</dbReference>
<dbReference type="Pfam" id="PF03788">
    <property type="entry name" value="LrgA"/>
    <property type="match status" value="1"/>
</dbReference>